<accession>P58779</accession>
<proteinExistence type="evidence at protein level"/>
<dbReference type="PDB" id="1I6F">
    <property type="method" value="NMR"/>
    <property type="chains" value="A=1-59"/>
</dbReference>
<dbReference type="PDB" id="1I6G">
    <property type="method" value="NMR"/>
    <property type="chains" value="A=1-59"/>
</dbReference>
<dbReference type="PDB" id="1NH5">
    <property type="method" value="NMR"/>
    <property type="chains" value="A=1-59"/>
</dbReference>
<dbReference type="PDBsum" id="1I6F"/>
<dbReference type="PDBsum" id="1I6G"/>
<dbReference type="PDBsum" id="1NH5"/>
<dbReference type="BMRB" id="P58779"/>
<dbReference type="SMR" id="P58779"/>
<dbReference type="EnsemblMetazoa" id="XM_023354935.1">
    <property type="protein sequence ID" value="XP_023210703.1"/>
    <property type="gene ID" value="LOC111613583"/>
</dbReference>
<dbReference type="EvolutionaryTrace" id="P58779"/>
<dbReference type="GO" id="GO:0005576">
    <property type="term" value="C:extracellular region"/>
    <property type="evidence" value="ECO:0007669"/>
    <property type="project" value="UniProtKB-SubCell"/>
</dbReference>
<dbReference type="GO" id="GO:0019871">
    <property type="term" value="F:sodium channel inhibitor activity"/>
    <property type="evidence" value="ECO:0007669"/>
    <property type="project" value="InterPro"/>
</dbReference>
<dbReference type="GO" id="GO:0090729">
    <property type="term" value="F:toxin activity"/>
    <property type="evidence" value="ECO:0007669"/>
    <property type="project" value="UniProtKB-KW"/>
</dbReference>
<dbReference type="GO" id="GO:0006952">
    <property type="term" value="P:defense response"/>
    <property type="evidence" value="ECO:0007669"/>
    <property type="project" value="InterPro"/>
</dbReference>
<dbReference type="CDD" id="cd23106">
    <property type="entry name" value="neurotoxins_LC_scorpion"/>
    <property type="match status" value="1"/>
</dbReference>
<dbReference type="FunFam" id="3.30.30.10:FF:000002">
    <property type="entry name" value="Alpha-like toxin BmK-M1"/>
    <property type="match status" value="1"/>
</dbReference>
<dbReference type="Gene3D" id="3.30.30.10">
    <property type="entry name" value="Knottin, scorpion toxin-like"/>
    <property type="match status" value="1"/>
</dbReference>
<dbReference type="InterPro" id="IPR044062">
    <property type="entry name" value="LCN-type_CS_alpha_beta_dom"/>
</dbReference>
<dbReference type="InterPro" id="IPR003614">
    <property type="entry name" value="Scorpion_toxin-like"/>
</dbReference>
<dbReference type="InterPro" id="IPR036574">
    <property type="entry name" value="Scorpion_toxin-like_sf"/>
</dbReference>
<dbReference type="InterPro" id="IPR018218">
    <property type="entry name" value="Scorpion_toxinL"/>
</dbReference>
<dbReference type="InterPro" id="IPR002061">
    <property type="entry name" value="Scorpion_toxinL/defensin"/>
</dbReference>
<dbReference type="Pfam" id="PF00537">
    <property type="entry name" value="Toxin_3"/>
    <property type="match status" value="1"/>
</dbReference>
<dbReference type="PRINTS" id="PR00285">
    <property type="entry name" value="SCORPNTOXIN"/>
</dbReference>
<dbReference type="SMART" id="SM00505">
    <property type="entry name" value="Knot1"/>
    <property type="match status" value="1"/>
</dbReference>
<dbReference type="SUPFAM" id="SSF57095">
    <property type="entry name" value="Scorpion toxin-like"/>
    <property type="match status" value="1"/>
</dbReference>
<dbReference type="PROSITE" id="PS51863">
    <property type="entry name" value="LCN_CSAB"/>
    <property type="match status" value="1"/>
</dbReference>
<comment type="function">
    <text evidence="2">Binds voltage-independently sodium channels (Nav) and inhibits the inactivation of the activated channels, thereby blocking neuronal transmission. Is highly toxic to insects and barely toxic to mammals. As it does not compete with the classical alpha-toxin AaH2, this toxin is considered as an alpha-like toxin.</text>
</comment>
<comment type="subcellular location">
    <subcellularLocation>
        <location>Secreted</location>
    </subcellularLocation>
</comment>
<comment type="tissue specificity">
    <text>Expressed by the venom gland.</text>
</comment>
<comment type="domain">
    <text evidence="3">Has the structural arrangement of an alpha-helix connected to antiparallel beta-sheets by disulfide bonds (CS-alpha/beta).</text>
</comment>
<comment type="similarity">
    <text evidence="3">Belongs to the long (4 C-C) scorpion toxin superfamily. Sodium channel inhibitor family.</text>
</comment>
<protein>
    <recommendedName>
        <fullName>Alpha-like toxin CsEv5</fullName>
        <shortName>CsE v5</shortName>
        <shortName>CsE-v5</shortName>
    </recommendedName>
</protein>
<sequence>KDGYPVDSKGCKLSCVANNYCDNQCKMKKASGGHCYAMSCYCEGLPENAKVSDSATNIC</sequence>
<evidence type="ECO:0000255" key="1">
    <source>
        <dbReference type="PROSITE-ProRule" id="PRU01210"/>
    </source>
</evidence>
<evidence type="ECO:0000269" key="2">
    <source>
    </source>
</evidence>
<evidence type="ECO:0000305" key="3"/>
<evidence type="ECO:0007829" key="4">
    <source>
        <dbReference type="PDB" id="1I6F"/>
    </source>
</evidence>
<evidence type="ECO:0007829" key="5">
    <source>
        <dbReference type="PDB" id="1NH5"/>
    </source>
</evidence>
<name>SCX5_CENSC</name>
<reference key="1">
    <citation type="journal article" date="1991" name="Toxicon">
        <title>Characterization of cationic binding sites of neurotoxins from venom of the scorpion (Centruroides sculpturatus Ewing) using lanthanides as binding probes.</title>
        <authorList>
            <person name="David R.M."/>
            <person name="Krishna N.R."/>
            <person name="Watt D.D."/>
        </authorList>
    </citation>
    <scope>PROTEIN SEQUENCE</scope>
    <source>
        <tissue>Venom</tissue>
    </source>
</reference>
<reference key="2">
    <citation type="journal article" date="2001" name="Biochemistry">
        <title>Solution structure of an insect-specific neurotoxin from the New World scorpion Centruroides sculpturatus Ewing.</title>
        <authorList>
            <person name="Jablonsky M.J."/>
            <person name="Jackson P.L."/>
            <person name="Krishna N.R."/>
        </authorList>
    </citation>
    <scope>STRUCTURE BY NMR</scope>
    <scope>FUNCTION</scope>
    <scope>DISULFIDE BONDS</scope>
</reference>
<reference key="3">
    <citation type="journal article" date="2001" name="J. Magn. Reson.">
        <title>Automatic assignment of NOESY cross peaks and determination of the protein structure of a new world scorpion neurotoxin using NOAH/DIAMOD.</title>
        <authorList>
            <person name="Xu Y."/>
            <person name="Jablonsky M.J."/>
            <person name="Jackson P.L."/>
            <person name="Braun W."/>
            <person name="Krishna N.R."/>
        </authorList>
    </citation>
    <scope>STRUCTURE BY NMR</scope>
    <scope>DISULFIDE BONDS</scope>
</reference>
<feature type="chain" id="PRO_0000066774" description="Alpha-like toxin CsEv5">
    <location>
        <begin position="1"/>
        <end position="59"/>
    </location>
</feature>
<feature type="domain" description="LCN-type CS-alpha/beta" evidence="1">
    <location>
        <begin position="1"/>
        <end position="59"/>
    </location>
</feature>
<feature type="disulfide bond" evidence="1">
    <location>
        <begin position="11"/>
        <end position="59"/>
    </location>
</feature>
<feature type="disulfide bond" evidence="1">
    <location>
        <begin position="15"/>
        <end position="35"/>
    </location>
</feature>
<feature type="disulfide bond" evidence="1">
    <location>
        <begin position="21"/>
        <end position="40"/>
    </location>
</feature>
<feature type="disulfide bond" evidence="1">
    <location>
        <begin position="25"/>
        <end position="42"/>
    </location>
</feature>
<feature type="strand" evidence="4">
    <location>
        <begin position="2"/>
        <end position="6"/>
    </location>
</feature>
<feature type="strand" evidence="5">
    <location>
        <begin position="7"/>
        <end position="11"/>
    </location>
</feature>
<feature type="helix" evidence="4">
    <location>
        <begin position="18"/>
        <end position="27"/>
    </location>
</feature>
<feature type="strand" evidence="4">
    <location>
        <begin position="34"/>
        <end position="36"/>
    </location>
</feature>
<feature type="strand" evidence="4">
    <location>
        <begin position="39"/>
        <end position="44"/>
    </location>
</feature>
<feature type="strand" evidence="4">
    <location>
        <begin position="51"/>
        <end position="53"/>
    </location>
</feature>
<feature type="strand" evidence="5">
    <location>
        <begin position="54"/>
        <end position="56"/>
    </location>
</feature>
<keyword id="KW-0002">3D-structure</keyword>
<keyword id="KW-0903">Direct protein sequencing</keyword>
<keyword id="KW-1015">Disulfide bond</keyword>
<keyword id="KW-0872">Ion channel impairing toxin</keyword>
<keyword id="KW-0528">Neurotoxin</keyword>
<keyword id="KW-0964">Secreted</keyword>
<keyword id="KW-0800">Toxin</keyword>
<keyword id="KW-0738">Voltage-gated sodium channel impairing toxin</keyword>
<organism>
    <name type="scientific">Centruroides sculpturatus</name>
    <name type="common">Arizona bark scorpion</name>
    <dbReference type="NCBI Taxonomy" id="218467"/>
    <lineage>
        <taxon>Eukaryota</taxon>
        <taxon>Metazoa</taxon>
        <taxon>Ecdysozoa</taxon>
        <taxon>Arthropoda</taxon>
        <taxon>Chelicerata</taxon>
        <taxon>Arachnida</taxon>
        <taxon>Scorpiones</taxon>
        <taxon>Buthida</taxon>
        <taxon>Buthoidea</taxon>
        <taxon>Buthidae</taxon>
        <taxon>Centruroides</taxon>
    </lineage>
</organism>